<evidence type="ECO:0000255" key="1">
    <source>
        <dbReference type="HAMAP-Rule" id="MF_01326"/>
    </source>
</evidence>
<evidence type="ECO:0000305" key="2"/>
<feature type="chain" id="PRO_0000130754" description="Large ribosomal subunit protein uL24">
    <location>
        <begin position="1"/>
        <end position="105"/>
    </location>
</feature>
<name>RL24_XANAC</name>
<protein>
    <recommendedName>
        <fullName evidence="1">Large ribosomal subunit protein uL24</fullName>
    </recommendedName>
    <alternativeName>
        <fullName evidence="2">50S ribosomal protein L24</fullName>
    </alternativeName>
</protein>
<accession>Q8PNR5</accession>
<sequence length="105" mass="11226">MANRIKKGDQVVINTGKDKGKQGEVVRVDGDRVIVSNANVIKRHTKPNPQAGVAGGVVEREASIHISNVNIVNPATGKGERVGFKVLEDGRKLRVFRSSGEALDA</sequence>
<organism>
    <name type="scientific">Xanthomonas axonopodis pv. citri (strain 306)</name>
    <dbReference type="NCBI Taxonomy" id="190486"/>
    <lineage>
        <taxon>Bacteria</taxon>
        <taxon>Pseudomonadati</taxon>
        <taxon>Pseudomonadota</taxon>
        <taxon>Gammaproteobacteria</taxon>
        <taxon>Lysobacterales</taxon>
        <taxon>Lysobacteraceae</taxon>
        <taxon>Xanthomonas</taxon>
    </lineage>
</organism>
<keyword id="KW-0687">Ribonucleoprotein</keyword>
<keyword id="KW-0689">Ribosomal protein</keyword>
<keyword id="KW-0694">RNA-binding</keyword>
<keyword id="KW-0699">rRNA-binding</keyword>
<comment type="function">
    <text evidence="1">One of two assembly initiator proteins, it binds directly to the 5'-end of the 23S rRNA, where it nucleates assembly of the 50S subunit.</text>
</comment>
<comment type="function">
    <text evidence="1">One of the proteins that surrounds the polypeptide exit tunnel on the outside of the subunit.</text>
</comment>
<comment type="subunit">
    <text evidence="1">Part of the 50S ribosomal subunit.</text>
</comment>
<comment type="similarity">
    <text evidence="1">Belongs to the universal ribosomal protein uL24 family.</text>
</comment>
<dbReference type="EMBL" id="AE008923">
    <property type="protein sequence ID" value="AAM35866.1"/>
    <property type="molecule type" value="Genomic_DNA"/>
</dbReference>
<dbReference type="RefSeq" id="WP_003486696.1">
    <property type="nucleotide sequence ID" value="NC_003919.1"/>
</dbReference>
<dbReference type="SMR" id="Q8PNR5"/>
<dbReference type="GeneID" id="97210515"/>
<dbReference type="KEGG" id="xac:XAC0983"/>
<dbReference type="eggNOG" id="COG0198">
    <property type="taxonomic scope" value="Bacteria"/>
</dbReference>
<dbReference type="HOGENOM" id="CLU_093315_2_2_6"/>
<dbReference type="Proteomes" id="UP000000576">
    <property type="component" value="Chromosome"/>
</dbReference>
<dbReference type="GO" id="GO:1990904">
    <property type="term" value="C:ribonucleoprotein complex"/>
    <property type="evidence" value="ECO:0007669"/>
    <property type="project" value="UniProtKB-KW"/>
</dbReference>
<dbReference type="GO" id="GO:0005840">
    <property type="term" value="C:ribosome"/>
    <property type="evidence" value="ECO:0007669"/>
    <property type="project" value="UniProtKB-KW"/>
</dbReference>
<dbReference type="GO" id="GO:0019843">
    <property type="term" value="F:rRNA binding"/>
    <property type="evidence" value="ECO:0007669"/>
    <property type="project" value="UniProtKB-UniRule"/>
</dbReference>
<dbReference type="GO" id="GO:0003735">
    <property type="term" value="F:structural constituent of ribosome"/>
    <property type="evidence" value="ECO:0007669"/>
    <property type="project" value="InterPro"/>
</dbReference>
<dbReference type="GO" id="GO:0006412">
    <property type="term" value="P:translation"/>
    <property type="evidence" value="ECO:0007669"/>
    <property type="project" value="UniProtKB-UniRule"/>
</dbReference>
<dbReference type="CDD" id="cd06089">
    <property type="entry name" value="KOW_RPL26"/>
    <property type="match status" value="1"/>
</dbReference>
<dbReference type="FunFam" id="2.30.30.30:FF:000004">
    <property type="entry name" value="50S ribosomal protein L24"/>
    <property type="match status" value="1"/>
</dbReference>
<dbReference type="Gene3D" id="2.30.30.30">
    <property type="match status" value="1"/>
</dbReference>
<dbReference type="HAMAP" id="MF_01326_B">
    <property type="entry name" value="Ribosomal_uL24_B"/>
    <property type="match status" value="1"/>
</dbReference>
<dbReference type="InterPro" id="IPR005824">
    <property type="entry name" value="KOW"/>
</dbReference>
<dbReference type="InterPro" id="IPR014722">
    <property type="entry name" value="Rib_uL2_dom2"/>
</dbReference>
<dbReference type="InterPro" id="IPR003256">
    <property type="entry name" value="Ribosomal_uL24"/>
</dbReference>
<dbReference type="InterPro" id="IPR041988">
    <property type="entry name" value="Ribosomal_uL24_KOW"/>
</dbReference>
<dbReference type="InterPro" id="IPR008991">
    <property type="entry name" value="Translation_prot_SH3-like_sf"/>
</dbReference>
<dbReference type="NCBIfam" id="TIGR01079">
    <property type="entry name" value="rplX_bact"/>
    <property type="match status" value="1"/>
</dbReference>
<dbReference type="PANTHER" id="PTHR12903">
    <property type="entry name" value="MITOCHONDRIAL RIBOSOMAL PROTEIN L24"/>
    <property type="match status" value="1"/>
</dbReference>
<dbReference type="Pfam" id="PF00467">
    <property type="entry name" value="KOW"/>
    <property type="match status" value="1"/>
</dbReference>
<dbReference type="Pfam" id="PF17136">
    <property type="entry name" value="ribosomal_L24"/>
    <property type="match status" value="1"/>
</dbReference>
<dbReference type="SMART" id="SM00739">
    <property type="entry name" value="KOW"/>
    <property type="match status" value="1"/>
</dbReference>
<dbReference type="SUPFAM" id="SSF50104">
    <property type="entry name" value="Translation proteins SH3-like domain"/>
    <property type="match status" value="1"/>
</dbReference>
<gene>
    <name evidence="1" type="primary">rplX</name>
    <name type="ordered locus">XAC0983</name>
</gene>
<reference key="1">
    <citation type="journal article" date="2002" name="Nature">
        <title>Comparison of the genomes of two Xanthomonas pathogens with differing host specificities.</title>
        <authorList>
            <person name="da Silva A.C.R."/>
            <person name="Ferro J.A."/>
            <person name="Reinach F.C."/>
            <person name="Farah C.S."/>
            <person name="Furlan L.R."/>
            <person name="Quaggio R.B."/>
            <person name="Monteiro-Vitorello C.B."/>
            <person name="Van Sluys M.A."/>
            <person name="Almeida N.F. Jr."/>
            <person name="Alves L.M.C."/>
            <person name="do Amaral A.M."/>
            <person name="Bertolini M.C."/>
            <person name="Camargo L.E.A."/>
            <person name="Camarotte G."/>
            <person name="Cannavan F."/>
            <person name="Cardozo J."/>
            <person name="Chambergo F."/>
            <person name="Ciapina L.P."/>
            <person name="Cicarelli R.M.B."/>
            <person name="Coutinho L.L."/>
            <person name="Cursino-Santos J.R."/>
            <person name="El-Dorry H."/>
            <person name="Faria J.B."/>
            <person name="Ferreira A.J.S."/>
            <person name="Ferreira R.C.C."/>
            <person name="Ferro M.I.T."/>
            <person name="Formighieri E.F."/>
            <person name="Franco M.C."/>
            <person name="Greggio C.C."/>
            <person name="Gruber A."/>
            <person name="Katsuyama A.M."/>
            <person name="Kishi L.T."/>
            <person name="Leite R.P."/>
            <person name="Lemos E.G.M."/>
            <person name="Lemos M.V.F."/>
            <person name="Locali E.C."/>
            <person name="Machado M.A."/>
            <person name="Madeira A.M.B.N."/>
            <person name="Martinez-Rossi N.M."/>
            <person name="Martins E.C."/>
            <person name="Meidanis J."/>
            <person name="Menck C.F.M."/>
            <person name="Miyaki C.Y."/>
            <person name="Moon D.H."/>
            <person name="Moreira L.M."/>
            <person name="Novo M.T.M."/>
            <person name="Okura V.K."/>
            <person name="Oliveira M.C."/>
            <person name="Oliveira V.R."/>
            <person name="Pereira H.A."/>
            <person name="Rossi A."/>
            <person name="Sena J.A.D."/>
            <person name="Silva C."/>
            <person name="de Souza R.F."/>
            <person name="Spinola L.A.F."/>
            <person name="Takita M.A."/>
            <person name="Tamura R.E."/>
            <person name="Teixeira E.C."/>
            <person name="Tezza R.I.D."/>
            <person name="Trindade dos Santos M."/>
            <person name="Truffi D."/>
            <person name="Tsai S.M."/>
            <person name="White F.F."/>
            <person name="Setubal J.C."/>
            <person name="Kitajima J.P."/>
        </authorList>
    </citation>
    <scope>NUCLEOTIDE SEQUENCE [LARGE SCALE GENOMIC DNA]</scope>
    <source>
        <strain>306</strain>
    </source>
</reference>
<proteinExistence type="inferred from homology"/>